<keyword id="KW-0007">Acetylation</keyword>
<keyword id="KW-0025">Alternative splicing</keyword>
<keyword id="KW-0067">ATP-binding</keyword>
<keyword id="KW-0156">Chromatin regulator</keyword>
<keyword id="KW-0903">Direct protein sequencing</keyword>
<keyword id="KW-0238">DNA-binding</keyword>
<keyword id="KW-0347">Helicase</keyword>
<keyword id="KW-0378">Hydrolase</keyword>
<keyword id="KW-0547">Nucleotide-binding</keyword>
<keyword id="KW-0539">Nucleus</keyword>
<keyword id="KW-0597">Phosphoprotein</keyword>
<keyword id="KW-1185">Reference proteome</keyword>
<protein>
    <recommendedName>
        <fullName>E1A-binding protein p400</fullName>
        <ecNumber>3.6.4.-</ecNumber>
    </recommendedName>
    <alternativeName>
        <fullName>Domino homolog</fullName>
        <shortName>mDomino</shortName>
    </alternativeName>
    <alternativeName>
        <fullName>p400 kDa SWI2/SNF2-related protein</fullName>
    </alternativeName>
</protein>
<reference key="1">
    <citation type="journal article" date="2003" name="Genes Cells">
        <title>A SWI2/SNF2-type ATPase/helicase protein, mDomino, interacts with myeloid zinc finger protein 2A (MZF-2A) to regulate its transcriptional activity.</title>
        <authorList>
            <person name="Ogawa H."/>
            <person name="Ueda T."/>
            <person name="Aoyama T."/>
            <person name="Aronheim A."/>
            <person name="Nagata S."/>
            <person name="Fukunaga R."/>
        </authorList>
    </citation>
    <scope>NUCLEOTIDE SEQUENCE [MRNA] (ISOFORMS 2 AND 3)</scope>
    <scope>INTERACTION WITH ZNF42</scope>
</reference>
<reference key="2">
    <citation type="journal article" date="2009" name="PLoS Biol.">
        <title>Lineage-specific biology revealed by a finished genome assembly of the mouse.</title>
        <authorList>
            <person name="Church D.M."/>
            <person name="Goodstadt L."/>
            <person name="Hillier L.W."/>
            <person name="Zody M.C."/>
            <person name="Goldstein S."/>
            <person name="She X."/>
            <person name="Bult C.J."/>
            <person name="Agarwala R."/>
            <person name="Cherry J.L."/>
            <person name="DiCuccio M."/>
            <person name="Hlavina W."/>
            <person name="Kapustin Y."/>
            <person name="Meric P."/>
            <person name="Maglott D."/>
            <person name="Birtle Z."/>
            <person name="Marques A.C."/>
            <person name="Graves T."/>
            <person name="Zhou S."/>
            <person name="Teague B."/>
            <person name="Potamousis K."/>
            <person name="Churas C."/>
            <person name="Place M."/>
            <person name="Herschleb J."/>
            <person name="Runnheim R."/>
            <person name="Forrest D."/>
            <person name="Amos-Landgraf J."/>
            <person name="Schwartz D.C."/>
            <person name="Cheng Z."/>
            <person name="Lindblad-Toh K."/>
            <person name="Eichler E.E."/>
            <person name="Ponting C.P."/>
        </authorList>
    </citation>
    <scope>NUCLEOTIDE SEQUENCE [LARGE SCALE GENOMIC DNA]</scope>
    <source>
        <strain>C57BL/6J</strain>
    </source>
</reference>
<reference key="3">
    <citation type="journal article" date="2005" name="Science">
        <title>The transcriptional landscape of the mammalian genome.</title>
        <authorList>
            <person name="Carninci P."/>
            <person name="Kasukawa T."/>
            <person name="Katayama S."/>
            <person name="Gough J."/>
            <person name="Frith M.C."/>
            <person name="Maeda N."/>
            <person name="Oyama R."/>
            <person name="Ravasi T."/>
            <person name="Lenhard B."/>
            <person name="Wells C."/>
            <person name="Kodzius R."/>
            <person name="Shimokawa K."/>
            <person name="Bajic V.B."/>
            <person name="Brenner S.E."/>
            <person name="Batalov S."/>
            <person name="Forrest A.R."/>
            <person name="Zavolan M."/>
            <person name="Davis M.J."/>
            <person name="Wilming L.G."/>
            <person name="Aidinis V."/>
            <person name="Allen J.E."/>
            <person name="Ambesi-Impiombato A."/>
            <person name="Apweiler R."/>
            <person name="Aturaliya R.N."/>
            <person name="Bailey T.L."/>
            <person name="Bansal M."/>
            <person name="Baxter L."/>
            <person name="Beisel K.W."/>
            <person name="Bersano T."/>
            <person name="Bono H."/>
            <person name="Chalk A.M."/>
            <person name="Chiu K.P."/>
            <person name="Choudhary V."/>
            <person name="Christoffels A."/>
            <person name="Clutterbuck D.R."/>
            <person name="Crowe M.L."/>
            <person name="Dalla E."/>
            <person name="Dalrymple B.P."/>
            <person name="de Bono B."/>
            <person name="Della Gatta G."/>
            <person name="di Bernardo D."/>
            <person name="Down T."/>
            <person name="Engstrom P."/>
            <person name="Fagiolini M."/>
            <person name="Faulkner G."/>
            <person name="Fletcher C.F."/>
            <person name="Fukushima T."/>
            <person name="Furuno M."/>
            <person name="Futaki S."/>
            <person name="Gariboldi M."/>
            <person name="Georgii-Hemming P."/>
            <person name="Gingeras T.R."/>
            <person name="Gojobori T."/>
            <person name="Green R.E."/>
            <person name="Gustincich S."/>
            <person name="Harbers M."/>
            <person name="Hayashi Y."/>
            <person name="Hensch T.K."/>
            <person name="Hirokawa N."/>
            <person name="Hill D."/>
            <person name="Huminiecki L."/>
            <person name="Iacono M."/>
            <person name="Ikeo K."/>
            <person name="Iwama A."/>
            <person name="Ishikawa T."/>
            <person name="Jakt M."/>
            <person name="Kanapin A."/>
            <person name="Katoh M."/>
            <person name="Kawasawa Y."/>
            <person name="Kelso J."/>
            <person name="Kitamura H."/>
            <person name="Kitano H."/>
            <person name="Kollias G."/>
            <person name="Krishnan S.P."/>
            <person name="Kruger A."/>
            <person name="Kummerfeld S.K."/>
            <person name="Kurochkin I.V."/>
            <person name="Lareau L.F."/>
            <person name="Lazarevic D."/>
            <person name="Lipovich L."/>
            <person name="Liu J."/>
            <person name="Liuni S."/>
            <person name="McWilliam S."/>
            <person name="Madan Babu M."/>
            <person name="Madera M."/>
            <person name="Marchionni L."/>
            <person name="Matsuda H."/>
            <person name="Matsuzawa S."/>
            <person name="Miki H."/>
            <person name="Mignone F."/>
            <person name="Miyake S."/>
            <person name="Morris K."/>
            <person name="Mottagui-Tabar S."/>
            <person name="Mulder N."/>
            <person name="Nakano N."/>
            <person name="Nakauchi H."/>
            <person name="Ng P."/>
            <person name="Nilsson R."/>
            <person name="Nishiguchi S."/>
            <person name="Nishikawa S."/>
            <person name="Nori F."/>
            <person name="Ohara O."/>
            <person name="Okazaki Y."/>
            <person name="Orlando V."/>
            <person name="Pang K.C."/>
            <person name="Pavan W.J."/>
            <person name="Pavesi G."/>
            <person name="Pesole G."/>
            <person name="Petrovsky N."/>
            <person name="Piazza S."/>
            <person name="Reed J."/>
            <person name="Reid J.F."/>
            <person name="Ring B.Z."/>
            <person name="Ringwald M."/>
            <person name="Rost B."/>
            <person name="Ruan Y."/>
            <person name="Salzberg S.L."/>
            <person name="Sandelin A."/>
            <person name="Schneider C."/>
            <person name="Schoenbach C."/>
            <person name="Sekiguchi K."/>
            <person name="Semple C.A."/>
            <person name="Seno S."/>
            <person name="Sessa L."/>
            <person name="Sheng Y."/>
            <person name="Shibata Y."/>
            <person name="Shimada H."/>
            <person name="Shimada K."/>
            <person name="Silva D."/>
            <person name="Sinclair B."/>
            <person name="Sperling S."/>
            <person name="Stupka E."/>
            <person name="Sugiura K."/>
            <person name="Sultana R."/>
            <person name="Takenaka Y."/>
            <person name="Taki K."/>
            <person name="Tammoja K."/>
            <person name="Tan S.L."/>
            <person name="Tang S."/>
            <person name="Taylor M.S."/>
            <person name="Tegner J."/>
            <person name="Teichmann S.A."/>
            <person name="Ueda H.R."/>
            <person name="van Nimwegen E."/>
            <person name="Verardo R."/>
            <person name="Wei C.L."/>
            <person name="Yagi K."/>
            <person name="Yamanishi H."/>
            <person name="Zabarovsky E."/>
            <person name="Zhu S."/>
            <person name="Zimmer A."/>
            <person name="Hide W."/>
            <person name="Bult C."/>
            <person name="Grimmond S.M."/>
            <person name="Teasdale R.D."/>
            <person name="Liu E.T."/>
            <person name="Brusic V."/>
            <person name="Quackenbush J."/>
            <person name="Wahlestedt C."/>
            <person name="Mattick J.S."/>
            <person name="Hume D.A."/>
            <person name="Kai C."/>
            <person name="Sasaki D."/>
            <person name="Tomaru Y."/>
            <person name="Fukuda S."/>
            <person name="Kanamori-Katayama M."/>
            <person name="Suzuki M."/>
            <person name="Aoki J."/>
            <person name="Arakawa T."/>
            <person name="Iida J."/>
            <person name="Imamura K."/>
            <person name="Itoh M."/>
            <person name="Kato T."/>
            <person name="Kawaji H."/>
            <person name="Kawagashira N."/>
            <person name="Kawashima T."/>
            <person name="Kojima M."/>
            <person name="Kondo S."/>
            <person name="Konno H."/>
            <person name="Nakano K."/>
            <person name="Ninomiya N."/>
            <person name="Nishio T."/>
            <person name="Okada M."/>
            <person name="Plessy C."/>
            <person name="Shibata K."/>
            <person name="Shiraki T."/>
            <person name="Suzuki S."/>
            <person name="Tagami M."/>
            <person name="Waki K."/>
            <person name="Watahiki A."/>
            <person name="Okamura-Oho Y."/>
            <person name="Suzuki H."/>
            <person name="Kawai J."/>
            <person name="Hayashizaki Y."/>
        </authorList>
    </citation>
    <scope>NUCLEOTIDE SEQUENCE [LARGE SCALE MRNA] OF 1-896 (ISOFORM 3)</scope>
    <scope>NUCLEOTIDE SEQUENCE [LARGE SCALE MRNA] OF 1-894 (ISOFORM 2)</scope>
    <scope>NUCLEOTIDE SEQUENCE [LARGE SCALE MRNA] OF 1-677 (ISOFORM 1)</scope>
    <scope>NUCLEOTIDE SEQUENCE [LARGE SCALE MRNA] OF 992-2359</scope>
    <source>
        <strain>C57BL/6J</strain>
        <tissue>Cerebellum</tissue>
        <tissue>Corpora quadrigemina</tissue>
        <tissue>Embryo</tissue>
        <tissue>Testis</tissue>
        <tissue>Thymus</tissue>
    </source>
</reference>
<reference key="4">
    <citation type="journal article" date="2003" name="DNA Res.">
        <title>Prediction of the coding sequences of mouse homologues of KIAA gene: III. The complete nucleotide sequences of 500 mouse KIAA-homologous cDNAs identified by screening of terminal sequences of cDNA clones randomly sampled from size-fractionated libraries.</title>
        <authorList>
            <person name="Okazaki N."/>
            <person name="Kikuno R."/>
            <person name="Ohara R."/>
            <person name="Inamoto S."/>
            <person name="Koseki H."/>
            <person name="Hiraoka S."/>
            <person name="Saga Y."/>
            <person name="Nagase T."/>
            <person name="Ohara O."/>
            <person name="Koga H."/>
        </authorList>
    </citation>
    <scope>NUCLEOTIDE SEQUENCE [LARGE SCALE MRNA] OF 1415-3072 (ISOFORM 5)</scope>
    <source>
        <tissue>Brain</tissue>
    </source>
</reference>
<reference key="5">
    <citation type="submission" date="2005-03" db="EMBL/GenBank/DDBJ databases">
        <authorList>
            <person name="Okazaki N."/>
            <person name="Kikuno R."/>
            <person name="Nagase T."/>
            <person name="Ohara O."/>
            <person name="Koga H."/>
        </authorList>
    </citation>
    <scope>SEQUENCE REVISION</scope>
</reference>
<reference key="6">
    <citation type="journal article" date="2004" name="Genome Res.">
        <title>The status, quality, and expansion of the NIH full-length cDNA project: the Mammalian Gene Collection (MGC).</title>
        <authorList>
            <consortium name="The MGC Project Team"/>
        </authorList>
    </citation>
    <scope>NUCLEOTIDE SEQUENCE [LARGE SCALE MRNA] OF 1881-3072 (ISOFORM 4)</scope>
    <scope>NUCLEOTIDE SEQUENCE [LARGE SCALE MRNA] OF 2429-3072 (ISOFORMS 1/2/3)</scope>
    <source>
        <strain>C57BL/6J</strain>
        <strain>FVB/N-3</strain>
        <tissue>Brain</tissue>
        <tissue>Mammary gland</tissue>
    </source>
</reference>
<reference key="7">
    <citation type="submission" date="2009-01" db="UniProtKB">
        <authorList>
            <person name="Lubec G."/>
            <person name="Sunyer B."/>
            <person name="Chen W.-Q."/>
        </authorList>
    </citation>
    <scope>PROTEIN SEQUENCE OF 2443-2450</scope>
    <scope>IDENTIFICATION BY MASS SPECTROMETRY</scope>
    <source>
        <strain>OF1</strain>
        <tissue>Hippocampus</tissue>
    </source>
</reference>
<reference key="8">
    <citation type="journal article" date="2007" name="Proc. Natl. Acad. Sci. U.S.A.">
        <title>Large-scale phosphorylation analysis of mouse liver.</title>
        <authorList>
            <person name="Villen J."/>
            <person name="Beausoleil S.A."/>
            <person name="Gerber S.A."/>
            <person name="Gygi S.P."/>
        </authorList>
    </citation>
    <scope>IDENTIFICATION BY MASS SPECTROMETRY [LARGE SCALE ANALYSIS]</scope>
    <source>
        <tissue>Liver</tissue>
    </source>
</reference>
<reference key="9">
    <citation type="journal article" date="2008" name="Cytogenet. Genome Res.">
        <title>PHF5A represents a bridge protein between splicing proteins and ATP-dependent helicases and is differentially expressed during mouse spermatogenesis.</title>
        <authorList>
            <person name="Rzymski T."/>
            <person name="Grzmil P."/>
            <person name="Meinhardt A."/>
            <person name="Wolf S."/>
            <person name="Burfeind P."/>
        </authorList>
    </citation>
    <scope>INTERACTION WITH PHF5A</scope>
</reference>
<reference key="10">
    <citation type="journal article" date="2010" name="Cell">
        <title>A tissue-specific atlas of mouse protein phosphorylation and expression.</title>
        <authorList>
            <person name="Huttlin E.L."/>
            <person name="Jedrychowski M.P."/>
            <person name="Elias J.E."/>
            <person name="Goswami T."/>
            <person name="Rad R."/>
            <person name="Beausoleil S.A."/>
            <person name="Villen J."/>
            <person name="Haas W."/>
            <person name="Sowa M.E."/>
            <person name="Gygi S.P."/>
        </authorList>
    </citation>
    <scope>PHOSPHORYLATION [LARGE SCALE ANALYSIS] AT SER-52; SER-134; SER-315; SER-321; SER-741; SER-754; THR-922; SER-923; SER-927; SER-940; THR-944; SER-1009 AND SER-1010</scope>
    <scope>IDENTIFICATION BY MASS SPECTROMETRY [LARGE SCALE ANALYSIS]</scope>
    <source>
        <tissue>Brain</tissue>
        <tissue>Heart</tissue>
        <tissue>Kidney</tissue>
        <tissue>Liver</tissue>
        <tissue>Lung</tissue>
        <tissue>Pancreas</tissue>
        <tissue>Spleen</tissue>
        <tissue>Testis</tissue>
    </source>
</reference>
<sequence length="3072" mass="337180">MHHGSGPQNVQHQLQRSRSFTGSEEEQPAHPNLPPSPAAPFAPSASPSAPQSPGYQIQQLMSRSPVAGQNVNITLQNVGPVVGGNQQITLAPLPLPNPTSPGFQFGAQQRRFEHGSPSYIQVTSPMSQQVQTQSPTQPSPGPGQTLQNVRAGAPGPGLGICSNSPTGGFVDASVLVRQISLSPSSGGHFVFQEAPGLTQMAQGAQVQLQHSGAPITVRERRLSQPHAQSGGTIHHLGPQSPAAAGGTGLQPLASPNHITTASLPPQISSIIQGQLIQQQQQVLQGQPMNRSLGFERTPGVLLPGVGGPSAFGMTSPPPPTSPSRTTMPPGLSSVPLTSMGSSGMKKVPKKLEEIPPASQEMAQMRKQCLDYHYKEMEALKEVFKEYLIELFFLQHLQGNMMDFLAFKKKHYAPLQAYLRQNDLDIEEEEEEEEEEEGKSEVINDEVKVVTGKDGQTGTPVAIATQLPPNVSAAFSSQQQPFQHQSLTGSLVVGPGSATEADPFKRQQVMPPTEQSKRPRLEVGHPGVVFQHPGVNAGVPLQQLMPTVQGGMPPTPQATQLTGQKQSQQQYDPSTGPPVQNAASLHTPPPQLPARLPPASVPATALPSTLQFSQQSQMVEASTQLQIPVKTQQLNAPIPAPLPSQLPAPSSQPAQPALHVPMPGKAQMQTSQLSSQTQTVASTRPPLDSAQPCQRSLPTSSSSSSLVPVSGSGPGPSPARSSPVNRPSSATNKALSPITSRSPGVAVSAPPKPQSPAQNAASSQDGSQDKLAEQITLENQIHQRIADLRKEGLWSLRRLPKLQEAPRPKSHWDYLLEEMQWMATDFAQERRWKLAAAKKLVRTVARHHEEKKLREERGKKEEQSRLRRIAATTAREIEYFWSNIEQVVEIKLQVELEEKRKKALNLQKVSRRGKESRLKGFDTSPEHSLDLGISGRKRKASTSLTDDEVEDEEETIEEEEAHEGLVDHHTELTNLAKEAELPLIDLMKLYEGAFLPNFQWPQPEPDHEESSGEEDVEDCPSDRESRRDSVLIDSLFIMDQFKAAERMSIGKSNTKDITEVTAVAEAILPKGSARVTTAVKFSAPSLLYGALRDYQKIGLDWLAKLYRKNLNGILADEAGLGKTVQIIAFFAHLACNEGNWGPHLVVMRSCNILKWELELKRWCPGLKTLSYVGSHRELKAKRQEWTEPNNFHICITSYKQFFRGYTAFSRVHWKCLVVDEMQRVKGMTERHWEAIFKLQSQQRLLLIDVPLHNTFLELWTMVHFLIPGISRPYLSFPLKAPNEENQDYYHKMVIRLHRVTQPFILRRTKRDVEKQLTRKYEHVLKCRLSSRQKALYEDVILQPRTQEALKSGHFVSVLSVLTRLQRICNHPGLVEPRVPGSSFAAGSLQYKSASLILRVLEREFWKETDLSIFDLIGLENKITRHEAELLCKKKVTRKLMEEVFASPPPSARPAAVKLKASRLFQPVQYGQKPEGRTVAFPSTHPPRMANTNTSTATPQGQVRGRPPIATFSANPDTKGGEVVKIAQLASIAGPQSRVAQPETPVTLQFQGNKFTLSHSQLRQLTAGQPLQLQGSVLQIVSAPGQPYLRAPGPVVMQTVSQAGAVHSTLGSKPPTSGPSPAPLTPQVGVPGRVAVSAMAVGEPGLASKPASPAAGPTQEEKSRLLKERLDQIHFINERRCSQAPVYGRDLLRICSLPGRRKRPLCWSLDSNFGKGPKGVNYDMSLSKSEGDLILTLSQESLQDVLGRVACVIPPVVATPPSLWVARPPSLYSSRLRALRQCLREHTGPYHRQLQQLTALRSLQFPELRLVQFDSGKLEALAILLQKLKSEGRRVLILSQMVLMLDILEMFLNFHYLTYVRIDENANSEQRQELMRSFNRDRRIFCALLSTHSRATGINLVEADTVVFYDNDLNPVMDAKAQEWCDRIGRCKDIHIYRLVSGNSIEEKLLKNGTKDLIREVAAQGNDYSMAFLTQRTIQELFEVYSPMDDTGFPVKAEEFVVLSQEPSVSETIAPKIARPFIEALKSIECLEEDAQRSTEEAVPGSSSVAVSSDSDGSRYDEEPSQLEELADFMEQLTPIEKYALNYLELFHTTTEQEKERISEDLVMASMKDWETRNARALQEREARLQLEQEEAELLTYTREDAYTMEYVYEDADGQTEVMPLWTPPTPPQDDNDIYIDSVMCLMYETTPIPEAKLPPVYVRKERKRHKTDPSAAGRKKKQRHGEAVVPPRSLFDRATPGMLKIRREGKEQKKNLLLKQQTPFAKPLPTYVKSSGEPAQDSPDWLIGEDWALLQAVKQLLELPLNLTIVSPAHTPNWDLVSDVVNSCSRIYRSSKQCRNRYENVIIPREEGKSKNNRPLRTSQIYAQDENATHTQLYTSHFELMKMTAGKRSPPIKPLLGMNPFQKNPKHASVLAESGINYDKPLPPIQVASLRAERIAKEKKALADQQKAQQPPVTQPPPQQQQQQQQQQQQQQQQQQPPPPPQQPPPPVPQPQAASSQTPAGQPAVQPQPQPQVQTQPQPVQPQSKGQPTMTTVGSAAVLAGTIKTSVTGTSIPTGTVSGNVIVNTIAGVPAATFQSINKRLASPVAPGTLTTSGGSAPAQVVHTQQRAVGSPATATTDLVSMTTTQGVRAVTSVTASAVVTTNLTPVQTPTRSLVTQVSQATGVQLPGKTITPAAHFQLLRQQQQQQQQQQQQQQTSQVQVPQLQSQAQSPAQIKAVSKLGPEHIIKMQKQKMQLPPQPPPPQAQPGPPQQPAQVQVQTPQPPQQQQSPQLTTVTAPRPGALLTGTTVTNLQVARLTRVPTSQLQAQGQMQTQTPQPAQVALAKPPVVSVPAAVVSSPGVTTLPMNVAGISVAIGQPQKTAGQTVVAQPVNVQQLLKYKQQTAVQQQKAIQPQVAQGQAAVQQKLTTQQITTQGPQQKVAYAAQPALKTQFLTTPISQAQKLAGTQQVQTQIQVAKLPQVVQQQTPVASIQQVASASQQASPQTVTLTQATAAGQQVQMIPTVTATAQLVQQKLIQQQVVTTASASLQTPGGPSPAQLPASSDSPSQQPKLQMRVPAVRLKTPTKPPCQ</sequence>
<organism>
    <name type="scientific">Mus musculus</name>
    <name type="common">Mouse</name>
    <dbReference type="NCBI Taxonomy" id="10090"/>
    <lineage>
        <taxon>Eukaryota</taxon>
        <taxon>Metazoa</taxon>
        <taxon>Chordata</taxon>
        <taxon>Craniata</taxon>
        <taxon>Vertebrata</taxon>
        <taxon>Euteleostomi</taxon>
        <taxon>Mammalia</taxon>
        <taxon>Eutheria</taxon>
        <taxon>Euarchontoglires</taxon>
        <taxon>Glires</taxon>
        <taxon>Rodentia</taxon>
        <taxon>Myomorpha</taxon>
        <taxon>Muroidea</taxon>
        <taxon>Muridae</taxon>
        <taxon>Murinae</taxon>
        <taxon>Mus</taxon>
        <taxon>Mus</taxon>
    </lineage>
</organism>
<gene>
    <name type="primary">Ep400</name>
    <name type="synonym">Kiaa1498</name>
</gene>
<accession>Q8CHI8</accession>
<accession>E9QKV1</accession>
<accession>Q3TPY1</accession>
<accession>Q5RKN8</accession>
<accession>Q80TC8</accession>
<accession>Q8BXI5</accession>
<accession>Q8BYW3</accession>
<accession>Q8C0P6</accession>
<accession>Q8CHI7</accession>
<accession>Q8VDF4</accession>
<accession>Q9DA54</accession>
<proteinExistence type="evidence at protein level"/>
<comment type="function">
    <text evidence="1">Component of the NuA4 histone acetyltransferase complex which is involved in transcriptional activation of select genes principally by acetylation of nucleosomal histones H4 and H2A. This modification may both alter nucleosome - DNA interactions and promote interaction of the modified histones with other proteins which positively regulate transcription. May be required for transcriptional activation of E2F1 and MYC target genes during cellular proliferation. The NuA4 complex ATPase and helicase activities seem to be, at least in part, contributed by the association of RUVBL1 and RUVBL2 with EP400. Component of a SWR1-like complex that specifically mediates the removal of histone H2A.Z/H2AZ1 from the nucleosome (By similarity). Regulates transcriptional activity of ZNF42.</text>
</comment>
<comment type="subunit">
    <text evidence="1 8 9">Component of the NuA4 histone acetyltransferase complex which contains the catalytic subunit KAT5/TIP60 and the subunits EP400, TRRAP/PAF400, BRD8/SMAP, EPC1, DMAP1/DNMAP1, RUVBL1/TIP49, RUVBL2, ING3, actin, ACTL6A/BAF53A, MORF4L1/MRG15, MORF4L2/MRGX, MRGBP, YEATS4/GAS41, VPS72/YL1 and MEAF6. May also participate in the formation of NuA4 related complexes which lack the KAT5/TIP60 catalytic subunit, but which include the SWI/SNF related protein SRCAP. The NuA4 complex interacts with MYC. EP400 interacts with TRRAP, RUVBL1 and RUVBL2. Component of a SWR1-like complex (By similarity). Interacts with ZNF42. Interacts with PHF5A.</text>
</comment>
<comment type="subcellular location">
    <subcellularLocation>
        <location evidence="6">Nucleus</location>
    </subcellularLocation>
</comment>
<comment type="alternative products">
    <event type="alternative splicing"/>
    <isoform>
        <id>Q8CHI8-1</id>
        <name>1</name>
        <sequence type="displayed"/>
    </isoform>
    <isoform>
        <id>Q8CHI8-2</id>
        <name>2</name>
        <sequence type="described" ref="VSP_011996"/>
    </isoform>
    <isoform>
        <id>Q8CHI8-3</id>
        <name>3</name>
        <sequence type="described" ref="VSP_011996 VSP_011997"/>
    </isoform>
    <isoform>
        <id>Q8CHI8-4</id>
        <name>4</name>
        <sequence type="described" ref="VSP_011998"/>
    </isoform>
    <isoform>
        <id>Q8CHI8-5</id>
        <name>5</name>
        <sequence type="described" ref="VSP_017127 VSP_011998"/>
    </isoform>
</comment>
<comment type="tissue specificity">
    <text>Expressed in brain, thymus, lung, liver, spleen, kidney, colon and bone marrow.</text>
</comment>
<comment type="similarity">
    <text evidence="14">Belongs to the SNF2/RAD54 helicase family. SWR1 subfamily.</text>
</comment>
<comment type="sequence caution" evidence="14">
    <conflict type="miscellaneous discrepancy">
        <sequence resource="EMBL-CDS" id="BAB24439"/>
    </conflict>
    <text>Intron retention.</text>
</comment>
<comment type="sequence caution" evidence="14">
    <conflict type="miscellaneous discrepancy">
        <sequence resource="EMBL-CDS" id="BAC26781"/>
    </conflict>
    <text>Intron retention.</text>
</comment>
<comment type="sequence caution" evidence="14">
    <conflict type="erroneous initiation">
        <sequence resource="EMBL-CDS" id="BAC32913"/>
    </conflict>
    <text>Truncated N-terminus.</text>
</comment>
<dbReference type="EC" id="3.6.4.-"/>
<dbReference type="EMBL" id="AB092694">
    <property type="protein sequence ID" value="BAC45253.1"/>
    <property type="molecule type" value="mRNA"/>
</dbReference>
<dbReference type="EMBL" id="AB092695">
    <property type="protein sequence ID" value="BAC45254.1"/>
    <property type="molecule type" value="mRNA"/>
</dbReference>
<dbReference type="EMBL" id="AC161348">
    <property type="status" value="NOT_ANNOTATED_CDS"/>
    <property type="molecule type" value="Genomic_DNA"/>
</dbReference>
<dbReference type="EMBL" id="AK006168">
    <property type="protein sequence ID" value="BAB24439.1"/>
    <property type="status" value="ALT_SEQ"/>
    <property type="molecule type" value="mRNA"/>
</dbReference>
<dbReference type="EMBL" id="AK030095">
    <property type="protein sequence ID" value="BAC26781.1"/>
    <property type="status" value="ALT_SEQ"/>
    <property type="molecule type" value="mRNA"/>
</dbReference>
<dbReference type="EMBL" id="AK037693">
    <property type="protein sequence ID" value="BAC29849.2"/>
    <property type="molecule type" value="mRNA"/>
</dbReference>
<dbReference type="EMBL" id="AK046892">
    <property type="protein sequence ID" value="BAC32913.2"/>
    <property type="status" value="ALT_INIT"/>
    <property type="molecule type" value="mRNA"/>
</dbReference>
<dbReference type="EMBL" id="AK163566">
    <property type="protein sequence ID" value="BAE37399.1"/>
    <property type="molecule type" value="mRNA"/>
</dbReference>
<dbReference type="EMBL" id="AK164049">
    <property type="protein sequence ID" value="BAE37604.1"/>
    <property type="molecule type" value="mRNA"/>
</dbReference>
<dbReference type="EMBL" id="AK122517">
    <property type="protein sequence ID" value="BAC65799.2"/>
    <property type="molecule type" value="Transcribed_RNA"/>
</dbReference>
<dbReference type="EMBL" id="BC022153">
    <property type="protein sequence ID" value="AAH22153.1"/>
    <property type="molecule type" value="mRNA"/>
</dbReference>
<dbReference type="EMBL" id="BC085511">
    <property type="protein sequence ID" value="AAH85511.1"/>
    <property type="molecule type" value="mRNA"/>
</dbReference>
<dbReference type="CCDS" id="CCDS19529.1">
    <molecule id="Q8CHI8-2"/>
</dbReference>
<dbReference type="CCDS" id="CCDS51612.1">
    <molecule id="Q8CHI8-3"/>
</dbReference>
<dbReference type="RefSeq" id="NP_083613.2">
    <molecule id="Q8CHI8-2"/>
    <property type="nucleotide sequence ID" value="NM_029337.2"/>
</dbReference>
<dbReference type="RefSeq" id="NP_775089.1">
    <molecule id="Q8CHI8-3"/>
    <property type="nucleotide sequence ID" value="NM_173066.1"/>
</dbReference>
<dbReference type="RefSeq" id="XP_006535339.1">
    <property type="nucleotide sequence ID" value="XM_006535276.3"/>
</dbReference>
<dbReference type="SMR" id="Q8CHI8"/>
<dbReference type="BioGRID" id="217577">
    <property type="interactions" value="18"/>
</dbReference>
<dbReference type="ComplexPortal" id="CPX-990">
    <property type="entry name" value="NuA4 histone acetyltransferase complex"/>
</dbReference>
<dbReference type="DIP" id="DIP-61766N"/>
<dbReference type="FunCoup" id="Q8CHI8">
    <property type="interactions" value="3713"/>
</dbReference>
<dbReference type="IntAct" id="Q8CHI8">
    <property type="interactions" value="12"/>
</dbReference>
<dbReference type="MINT" id="Q8CHI8"/>
<dbReference type="STRING" id="10090.ENSMUSP00000049038"/>
<dbReference type="GlyGen" id="Q8CHI8">
    <property type="glycosylation" value="37 sites, 1 N-linked glycan (1 site), 1 O-linked glycan (32 sites)"/>
</dbReference>
<dbReference type="iPTMnet" id="Q8CHI8"/>
<dbReference type="PhosphoSitePlus" id="Q8CHI8"/>
<dbReference type="SwissPalm" id="Q8CHI8"/>
<dbReference type="CPTAC" id="non-CPTAC-3461"/>
<dbReference type="jPOST" id="Q8CHI8"/>
<dbReference type="PaxDb" id="10090-ENSMUSP00000049038"/>
<dbReference type="PeptideAtlas" id="Q8CHI8"/>
<dbReference type="ProteomicsDB" id="275620">
    <molecule id="Q8CHI8-1"/>
</dbReference>
<dbReference type="ProteomicsDB" id="275621">
    <molecule id="Q8CHI8-2"/>
</dbReference>
<dbReference type="ProteomicsDB" id="275622">
    <molecule id="Q8CHI8-3"/>
</dbReference>
<dbReference type="ProteomicsDB" id="275623">
    <molecule id="Q8CHI8-4"/>
</dbReference>
<dbReference type="ProteomicsDB" id="275624">
    <molecule id="Q8CHI8-5"/>
</dbReference>
<dbReference type="Pumba" id="Q8CHI8"/>
<dbReference type="Antibodypedia" id="19445">
    <property type="antibodies" value="102 antibodies from 20 providers"/>
</dbReference>
<dbReference type="DNASU" id="75560"/>
<dbReference type="Ensembl" id="ENSMUST00000041558.15">
    <molecule id="Q8CHI8-2"/>
    <property type="protein sequence ID" value="ENSMUSP00000049038.9"/>
    <property type="gene ID" value="ENSMUSG00000029505.19"/>
</dbReference>
<dbReference type="Ensembl" id="ENSMUST00000112436.9">
    <molecule id="Q8CHI8-3"/>
    <property type="protein sequence ID" value="ENSMUSP00000108055.3"/>
    <property type="gene ID" value="ENSMUSG00000029505.19"/>
</dbReference>
<dbReference type="GeneID" id="75560"/>
<dbReference type="KEGG" id="mmu:75560"/>
<dbReference type="UCSC" id="uc008yrf.1">
    <molecule id="Q8CHI8-4"/>
    <property type="organism name" value="mouse"/>
</dbReference>
<dbReference type="UCSC" id="uc008yrg.1">
    <molecule id="Q8CHI8-2"/>
    <property type="organism name" value="mouse"/>
</dbReference>
<dbReference type="UCSC" id="uc008yrh.1">
    <molecule id="Q8CHI8-3"/>
    <property type="organism name" value="mouse"/>
</dbReference>
<dbReference type="AGR" id="MGI:1276124"/>
<dbReference type="CTD" id="57634"/>
<dbReference type="MGI" id="MGI:1276124">
    <property type="gene designation" value="Ep400"/>
</dbReference>
<dbReference type="VEuPathDB" id="HostDB:ENSMUSG00000029505"/>
<dbReference type="eggNOG" id="KOG0391">
    <property type="taxonomic scope" value="Eukaryota"/>
</dbReference>
<dbReference type="GeneTree" id="ENSGT00940000154764"/>
<dbReference type="HOGENOM" id="CLU_000397_0_0_1"/>
<dbReference type="InParanoid" id="Q8CHI8"/>
<dbReference type="OMA" id="YGEDCRG"/>
<dbReference type="OrthoDB" id="82391at9989"/>
<dbReference type="TreeFam" id="TF106424"/>
<dbReference type="Reactome" id="R-MMU-2559584">
    <property type="pathway name" value="Formation of Senescence-Associated Heterochromatin Foci (SAHF)"/>
</dbReference>
<dbReference type="Reactome" id="R-MMU-2559586">
    <property type="pathway name" value="DNA Damage/Telomere Stress Induced Senescence"/>
</dbReference>
<dbReference type="BioGRID-ORCS" id="75560">
    <property type="hits" value="21 hits in 84 CRISPR screens"/>
</dbReference>
<dbReference type="ChiTaRS" id="Ep400">
    <property type="organism name" value="mouse"/>
</dbReference>
<dbReference type="PRO" id="PR:Q8CHI8"/>
<dbReference type="Proteomes" id="UP000000589">
    <property type="component" value="Chromosome 5"/>
</dbReference>
<dbReference type="RNAct" id="Q8CHI8">
    <property type="molecule type" value="protein"/>
</dbReference>
<dbReference type="Bgee" id="ENSMUSG00000029505">
    <property type="expression patterns" value="Expressed in animal zygote and 197 other cell types or tissues"/>
</dbReference>
<dbReference type="ExpressionAtlas" id="Q8CHI8">
    <property type="expression patterns" value="baseline and differential"/>
</dbReference>
<dbReference type="GO" id="GO:0035267">
    <property type="term" value="C:NuA4 histone acetyltransferase complex"/>
    <property type="evidence" value="ECO:0000250"/>
    <property type="project" value="UniProtKB"/>
</dbReference>
<dbReference type="GO" id="GO:0016607">
    <property type="term" value="C:nuclear speck"/>
    <property type="evidence" value="ECO:0000314"/>
    <property type="project" value="UniProtKB"/>
</dbReference>
<dbReference type="GO" id="GO:0000786">
    <property type="term" value="C:nucleosome"/>
    <property type="evidence" value="ECO:0000266"/>
    <property type="project" value="ComplexPortal"/>
</dbReference>
<dbReference type="GO" id="GO:0000812">
    <property type="term" value="C:Swr1 complex"/>
    <property type="evidence" value="ECO:0000250"/>
    <property type="project" value="UniProtKB"/>
</dbReference>
<dbReference type="GO" id="GO:0005524">
    <property type="term" value="F:ATP binding"/>
    <property type="evidence" value="ECO:0007669"/>
    <property type="project" value="UniProtKB-KW"/>
</dbReference>
<dbReference type="GO" id="GO:0003682">
    <property type="term" value="F:chromatin binding"/>
    <property type="evidence" value="ECO:0007669"/>
    <property type="project" value="Ensembl"/>
</dbReference>
<dbReference type="GO" id="GO:0003677">
    <property type="term" value="F:DNA binding"/>
    <property type="evidence" value="ECO:0007669"/>
    <property type="project" value="UniProtKB-KW"/>
</dbReference>
<dbReference type="GO" id="GO:0004386">
    <property type="term" value="F:helicase activity"/>
    <property type="evidence" value="ECO:0007669"/>
    <property type="project" value="UniProtKB-KW"/>
</dbReference>
<dbReference type="GO" id="GO:0016787">
    <property type="term" value="F:hydrolase activity"/>
    <property type="evidence" value="ECO:0007669"/>
    <property type="project" value="UniProtKB-KW"/>
</dbReference>
<dbReference type="GO" id="GO:1990405">
    <property type="term" value="F:protein antigen binding"/>
    <property type="evidence" value="ECO:0007669"/>
    <property type="project" value="Ensembl"/>
</dbReference>
<dbReference type="GO" id="GO:0006325">
    <property type="term" value="P:chromatin organization"/>
    <property type="evidence" value="ECO:0007669"/>
    <property type="project" value="UniProtKB-KW"/>
</dbReference>
<dbReference type="GO" id="GO:0045893">
    <property type="term" value="P:positive regulation of DNA-templated transcription"/>
    <property type="evidence" value="ECO:0000303"/>
    <property type="project" value="ComplexPortal"/>
</dbReference>
<dbReference type="GO" id="GO:1905168">
    <property type="term" value="P:positive regulation of double-strand break repair via homologous recombination"/>
    <property type="evidence" value="ECO:0000266"/>
    <property type="project" value="ComplexPortal"/>
</dbReference>
<dbReference type="GO" id="GO:0042981">
    <property type="term" value="P:regulation of apoptotic process"/>
    <property type="evidence" value="ECO:0000303"/>
    <property type="project" value="ComplexPortal"/>
</dbReference>
<dbReference type="GO" id="GO:0051726">
    <property type="term" value="P:regulation of cell cycle"/>
    <property type="evidence" value="ECO:0000266"/>
    <property type="project" value="ComplexPortal"/>
</dbReference>
<dbReference type="GO" id="GO:2000779">
    <property type="term" value="P:regulation of double-strand break repair"/>
    <property type="evidence" value="ECO:0000303"/>
    <property type="project" value="ComplexPortal"/>
</dbReference>
<dbReference type="CDD" id="cd18793">
    <property type="entry name" value="SF2_C_SNF"/>
    <property type="match status" value="1"/>
</dbReference>
<dbReference type="FunFam" id="3.40.50.300:FF:001580">
    <property type="entry name" value="E1A binding protein p400"/>
    <property type="match status" value="1"/>
</dbReference>
<dbReference type="FunFam" id="3.40.50.10810:FF:000033">
    <property type="entry name" value="E1A-binding protein p400 isoform X9"/>
    <property type="match status" value="1"/>
</dbReference>
<dbReference type="Gene3D" id="3.40.50.300">
    <property type="entry name" value="P-loop containing nucleotide triphosphate hydrolases"/>
    <property type="match status" value="1"/>
</dbReference>
<dbReference type="Gene3D" id="1.20.120.850">
    <property type="entry name" value="SWI2/SNF2 ATPases, N-terminal domain"/>
    <property type="match status" value="1"/>
</dbReference>
<dbReference type="Gene3D" id="3.40.50.10810">
    <property type="entry name" value="Tandem AAA-ATPase domain"/>
    <property type="match status" value="1"/>
</dbReference>
<dbReference type="InterPro" id="IPR031575">
    <property type="entry name" value="EP400_N"/>
</dbReference>
<dbReference type="InterPro" id="IPR014001">
    <property type="entry name" value="Helicase_ATP-bd"/>
</dbReference>
<dbReference type="InterPro" id="IPR001650">
    <property type="entry name" value="Helicase_C-like"/>
</dbReference>
<dbReference type="InterPro" id="IPR014012">
    <property type="entry name" value="HSA_dom"/>
</dbReference>
<dbReference type="InterPro" id="IPR027417">
    <property type="entry name" value="P-loop_NTPase"/>
</dbReference>
<dbReference type="InterPro" id="IPR001005">
    <property type="entry name" value="SANT/Myb"/>
</dbReference>
<dbReference type="InterPro" id="IPR038718">
    <property type="entry name" value="SNF2-like_sf"/>
</dbReference>
<dbReference type="InterPro" id="IPR049730">
    <property type="entry name" value="SNF2/RAD54-like_C"/>
</dbReference>
<dbReference type="InterPro" id="IPR000330">
    <property type="entry name" value="SNF2_N"/>
</dbReference>
<dbReference type="PANTHER" id="PTHR46459:SF1">
    <property type="entry name" value="E1A-BINDING PROTEIN P400"/>
    <property type="match status" value="1"/>
</dbReference>
<dbReference type="PANTHER" id="PTHR46459">
    <property type="entry name" value="E1A-BINDING PROTEIN P400-RELATED"/>
    <property type="match status" value="1"/>
</dbReference>
<dbReference type="Pfam" id="PF15790">
    <property type="entry name" value="EP400_N"/>
    <property type="match status" value="1"/>
</dbReference>
<dbReference type="Pfam" id="PF00271">
    <property type="entry name" value="Helicase_C"/>
    <property type="match status" value="1"/>
</dbReference>
<dbReference type="Pfam" id="PF07529">
    <property type="entry name" value="HSA"/>
    <property type="match status" value="1"/>
</dbReference>
<dbReference type="Pfam" id="PF00176">
    <property type="entry name" value="SNF2-rel_dom"/>
    <property type="match status" value="1"/>
</dbReference>
<dbReference type="SMART" id="SM00487">
    <property type="entry name" value="DEXDc"/>
    <property type="match status" value="1"/>
</dbReference>
<dbReference type="SMART" id="SM00490">
    <property type="entry name" value="HELICc"/>
    <property type="match status" value="1"/>
</dbReference>
<dbReference type="SMART" id="SM00573">
    <property type="entry name" value="HSA"/>
    <property type="match status" value="1"/>
</dbReference>
<dbReference type="SUPFAM" id="SSF52540">
    <property type="entry name" value="P-loop containing nucleoside triphosphate hydrolases"/>
    <property type="match status" value="2"/>
</dbReference>
<dbReference type="PROSITE" id="PS51192">
    <property type="entry name" value="HELICASE_ATP_BIND_1"/>
    <property type="match status" value="1"/>
</dbReference>
<dbReference type="PROSITE" id="PS51194">
    <property type="entry name" value="HELICASE_CTER"/>
    <property type="match status" value="1"/>
</dbReference>
<dbReference type="PROSITE" id="PS51204">
    <property type="entry name" value="HSA"/>
    <property type="match status" value="1"/>
</dbReference>
<dbReference type="PROSITE" id="PS50090">
    <property type="entry name" value="MYB_LIKE"/>
    <property type="match status" value="1"/>
</dbReference>
<feature type="chain" id="PRO_0000074313" description="E1A-binding protein p400">
    <location>
        <begin position="1"/>
        <end position="3072"/>
    </location>
</feature>
<feature type="domain" description="HSA" evidence="6">
    <location>
        <begin position="798"/>
        <end position="870"/>
    </location>
</feature>
<feature type="domain" description="Helicase ATP-binding" evidence="4">
    <location>
        <begin position="1102"/>
        <end position="1267"/>
    </location>
</feature>
<feature type="domain" description="Helicase C-terminal" evidence="5">
    <location>
        <begin position="1815"/>
        <end position="1972"/>
    </location>
</feature>
<feature type="domain" description="Myb-like" evidence="3">
    <location>
        <begin position="2276"/>
        <end position="2345"/>
    </location>
</feature>
<feature type="region of interest" description="Disordered" evidence="7">
    <location>
        <begin position="1"/>
        <end position="55"/>
    </location>
</feature>
<feature type="region of interest" description="Disordered" evidence="7">
    <location>
        <begin position="125"/>
        <end position="149"/>
    </location>
</feature>
<feature type="region of interest" description="Disordered" evidence="7">
    <location>
        <begin position="222"/>
        <end position="250"/>
    </location>
</feature>
<feature type="region of interest" description="Disordered" evidence="7">
    <location>
        <begin position="485"/>
        <end position="519"/>
    </location>
</feature>
<feature type="region of interest" description="Disordered" evidence="7">
    <location>
        <begin position="544"/>
        <end position="601"/>
    </location>
</feature>
<feature type="region of interest" description="Disordered" evidence="7">
    <location>
        <begin position="635"/>
        <end position="769"/>
    </location>
</feature>
<feature type="region of interest" description="Disordered" evidence="7">
    <location>
        <begin position="914"/>
        <end position="952"/>
    </location>
</feature>
<feature type="region of interest" description="Interactions with RUVBL1 and RUVBL2" evidence="1">
    <location>
        <begin position="950"/>
        <end position="1364"/>
    </location>
</feature>
<feature type="region of interest" description="Disordered" evidence="7">
    <location>
        <begin position="997"/>
        <end position="1024"/>
    </location>
</feature>
<feature type="region of interest" description="Disordered" evidence="7">
    <location>
        <begin position="1473"/>
        <end position="1503"/>
    </location>
</feature>
<feature type="region of interest" description="Disordered" evidence="7">
    <location>
        <begin position="2033"/>
        <end position="2062"/>
    </location>
</feature>
<feature type="region of interest" description="Disordered" evidence="7">
    <location>
        <begin position="2203"/>
        <end position="2227"/>
    </location>
</feature>
<feature type="region of interest" description="Interaction with ZNF42" evidence="8">
    <location>
        <begin position="2440"/>
        <end position="2699"/>
    </location>
</feature>
<feature type="region of interest" description="Disordered" evidence="7">
    <location>
        <begin position="2441"/>
        <end position="2534"/>
    </location>
</feature>
<feature type="region of interest" description="Disordered" evidence="7">
    <location>
        <begin position="2734"/>
        <end position="2790"/>
    </location>
</feature>
<feature type="region of interest" description="Disordered" evidence="7">
    <location>
        <begin position="3028"/>
        <end position="3072"/>
    </location>
</feature>
<feature type="short sequence motif" description="DEAD box-like">
    <location>
        <begin position="1218"/>
        <end position="1221"/>
    </location>
</feature>
<feature type="compositionally biased region" description="Polar residues" evidence="7">
    <location>
        <begin position="1"/>
        <end position="22"/>
    </location>
</feature>
<feature type="compositionally biased region" description="Pro residues" evidence="7">
    <location>
        <begin position="31"/>
        <end position="40"/>
    </location>
</feature>
<feature type="compositionally biased region" description="Low complexity" evidence="7">
    <location>
        <begin position="41"/>
        <end position="53"/>
    </location>
</feature>
<feature type="compositionally biased region" description="Low complexity" evidence="7">
    <location>
        <begin position="125"/>
        <end position="136"/>
    </location>
</feature>
<feature type="compositionally biased region" description="Low complexity" evidence="7">
    <location>
        <begin position="556"/>
        <end position="569"/>
    </location>
</feature>
<feature type="compositionally biased region" description="Polar residues" evidence="7">
    <location>
        <begin position="570"/>
        <end position="583"/>
    </location>
</feature>
<feature type="compositionally biased region" description="Pro residues" evidence="7">
    <location>
        <begin position="586"/>
        <end position="599"/>
    </location>
</feature>
<feature type="compositionally biased region" description="Low complexity" evidence="7">
    <location>
        <begin position="646"/>
        <end position="657"/>
    </location>
</feature>
<feature type="compositionally biased region" description="Low complexity" evidence="7">
    <location>
        <begin position="668"/>
        <end position="682"/>
    </location>
</feature>
<feature type="compositionally biased region" description="Low complexity" evidence="7">
    <location>
        <begin position="695"/>
        <end position="710"/>
    </location>
</feature>
<feature type="compositionally biased region" description="Polar residues" evidence="7">
    <location>
        <begin position="724"/>
        <end position="741"/>
    </location>
</feature>
<feature type="compositionally biased region" description="Polar residues" evidence="7">
    <location>
        <begin position="754"/>
        <end position="765"/>
    </location>
</feature>
<feature type="compositionally biased region" description="Basic and acidic residues" evidence="7">
    <location>
        <begin position="914"/>
        <end position="928"/>
    </location>
</feature>
<feature type="compositionally biased region" description="Polar residues" evidence="7">
    <location>
        <begin position="1488"/>
        <end position="1499"/>
    </location>
</feature>
<feature type="compositionally biased region" description="Low complexity" evidence="7">
    <location>
        <begin position="2043"/>
        <end position="2053"/>
    </location>
</feature>
<feature type="compositionally biased region" description="Low complexity" evidence="7">
    <location>
        <begin position="2446"/>
        <end position="2455"/>
    </location>
</feature>
<feature type="compositionally biased region" description="Low complexity" evidence="7">
    <location>
        <begin position="2463"/>
        <end position="2478"/>
    </location>
</feature>
<feature type="compositionally biased region" description="Pro residues" evidence="7">
    <location>
        <begin position="2479"/>
        <end position="2493"/>
    </location>
</feature>
<feature type="compositionally biased region" description="Low complexity" evidence="7">
    <location>
        <begin position="2494"/>
        <end position="2526"/>
    </location>
</feature>
<feature type="compositionally biased region" description="Pro residues" evidence="7">
    <location>
        <begin position="2739"/>
        <end position="2754"/>
    </location>
</feature>
<feature type="compositionally biased region" description="Low complexity" evidence="7">
    <location>
        <begin position="2755"/>
        <end position="2775"/>
    </location>
</feature>
<feature type="compositionally biased region" description="Polar residues" evidence="7">
    <location>
        <begin position="3042"/>
        <end position="3053"/>
    </location>
</feature>
<feature type="binding site" evidence="4">
    <location>
        <begin position="1115"/>
        <end position="1122"/>
    </location>
    <ligand>
        <name>ATP</name>
        <dbReference type="ChEBI" id="CHEBI:30616"/>
    </ligand>
</feature>
<feature type="modified residue" description="Phosphoserine" evidence="15">
    <location>
        <position position="52"/>
    </location>
</feature>
<feature type="modified residue" description="Phosphoserine" evidence="15">
    <location>
        <position position="134"/>
    </location>
</feature>
<feature type="modified residue" description="Phosphoserine" evidence="15">
    <location>
        <position position="315"/>
    </location>
</feature>
<feature type="modified residue" description="Phosphoserine" evidence="15">
    <location>
        <position position="321"/>
    </location>
</feature>
<feature type="modified residue" description="Phosphoserine" evidence="2">
    <location>
        <position position="735"/>
    </location>
</feature>
<feature type="modified residue" description="Phosphoserine" evidence="15">
    <location>
        <position position="741"/>
    </location>
</feature>
<feature type="modified residue" description="Phosphoserine" evidence="15">
    <location>
        <position position="754"/>
    </location>
</feature>
<feature type="modified residue" description="Phosphothreonine" evidence="15">
    <location>
        <position position="922"/>
    </location>
</feature>
<feature type="modified residue" description="Phosphoserine" evidence="15">
    <location>
        <position position="923"/>
    </location>
</feature>
<feature type="modified residue" description="Phosphoserine" evidence="15">
    <location>
        <position position="927"/>
    </location>
</feature>
<feature type="modified residue" description="Phosphoserine" evidence="15">
    <location>
        <position position="940"/>
    </location>
</feature>
<feature type="modified residue" description="Phosphothreonine" evidence="15">
    <location>
        <position position="944"/>
    </location>
</feature>
<feature type="modified residue" description="Phosphoserine" evidence="15">
    <location>
        <position position="1009"/>
    </location>
</feature>
<feature type="modified residue" description="Phosphoserine" evidence="15">
    <location>
        <position position="1010"/>
    </location>
</feature>
<feature type="modified residue" description="N6-acetyllysine" evidence="2">
    <location>
        <position position="1471"/>
    </location>
</feature>
<feature type="modified residue" description="Phosphoserine" evidence="2">
    <location>
        <position position="1646"/>
    </location>
</feature>
<feature type="modified residue" description="Phosphoserine" evidence="2">
    <location>
        <position position="1650"/>
    </location>
</feature>
<feature type="modified residue" description="N6-acetyllysine" evidence="2">
    <location>
        <position position="2265"/>
    </location>
</feature>
<feature type="modified residue" description="N6-acetyllysine" evidence="2">
    <location>
        <position position="2272"/>
    </location>
</feature>
<feature type="modified residue" description="Phosphoserine" evidence="2">
    <location>
        <position position="2614"/>
    </location>
</feature>
<feature type="splice variant" id="VSP_011996" description="In isoform 2 and isoform 3." evidence="10 13">
    <location>
        <begin position="446"/>
        <end position="482"/>
    </location>
</feature>
<feature type="splice variant" id="VSP_011997" description="In isoform 3." evidence="10 13">
    <location>
        <begin position="513"/>
        <end position="548"/>
    </location>
</feature>
<feature type="splice variant" id="VSP_017127" description="In isoform 5." evidence="11">
    <location>
        <begin position="1764"/>
        <end position="1919"/>
    </location>
</feature>
<feature type="splice variant" id="VSP_011998" description="In isoform 4 and isoform 5." evidence="11 12">
    <location>
        <begin position="2800"/>
        <end position="2806"/>
    </location>
</feature>
<feature type="sequence conflict" description="In Ref. 3; BAC26781." evidence="14" ref="3">
    <original>G</original>
    <variation>S</variation>
    <location>
        <position position="102"/>
    </location>
</feature>
<feature type="sequence conflict" description="In Ref. 3; BAC29849." evidence="14" ref="3">
    <original>A</original>
    <variation>D</variation>
    <location>
        <position position="107"/>
    </location>
</feature>
<feature type="sequence conflict" description="In Ref. 1; BAC45253/BAC45254." evidence="14" ref="1">
    <original>N</original>
    <variation>S</variation>
    <location>
        <position position="163"/>
    </location>
</feature>
<feature type="sequence conflict" description="In Ref. 3; BAB24439/BAC26781." evidence="14" ref="3">
    <original>TVASTRPPL</original>
    <variation>VLCGHWLFY</variation>
    <location>
        <begin position="678"/>
        <end position="686"/>
    </location>
</feature>
<feature type="sequence conflict" description="In Ref. 3; BAC29849." evidence="14" ref="3">
    <original>E</original>
    <variation>G</variation>
    <location>
        <position position="896"/>
    </location>
</feature>
<feature type="sequence conflict" description="In Ref. 3; BAC32913." evidence="14" ref="3">
    <original>K</original>
    <variation>N</variation>
    <location>
        <position position="2249"/>
    </location>
</feature>
<feature type="sequence conflict" description="In Ref. 3; BAC32913." evidence="14" ref="3">
    <original>SKNNRPL</original>
    <variation>LICEANP</variation>
    <location>
        <begin position="2353"/>
        <end position="2359"/>
    </location>
</feature>
<feature type="sequence conflict" description="In Ref. 1; BAC45253/BAC45254 and 6; AAH22153." evidence="14" ref="1 6">
    <original>T</original>
    <variation>A</variation>
    <location>
        <position position="2518"/>
    </location>
</feature>
<feature type="sequence conflict" description="In Ref. 1; BAC45253/BAC45254." evidence="14" ref="1">
    <original>A</original>
    <variation>V</variation>
    <location>
        <position position="2539"/>
    </location>
</feature>
<name>EP400_MOUSE</name>
<evidence type="ECO:0000250" key="1"/>
<evidence type="ECO:0000250" key="2">
    <source>
        <dbReference type="UniProtKB" id="Q96L91"/>
    </source>
</evidence>
<evidence type="ECO:0000255" key="3">
    <source>
        <dbReference type="PROSITE-ProRule" id="PRU00133"/>
    </source>
</evidence>
<evidence type="ECO:0000255" key="4">
    <source>
        <dbReference type="PROSITE-ProRule" id="PRU00541"/>
    </source>
</evidence>
<evidence type="ECO:0000255" key="5">
    <source>
        <dbReference type="PROSITE-ProRule" id="PRU00542"/>
    </source>
</evidence>
<evidence type="ECO:0000255" key="6">
    <source>
        <dbReference type="PROSITE-ProRule" id="PRU00549"/>
    </source>
</evidence>
<evidence type="ECO:0000256" key="7">
    <source>
        <dbReference type="SAM" id="MobiDB-lite"/>
    </source>
</evidence>
<evidence type="ECO:0000269" key="8">
    <source>
    </source>
</evidence>
<evidence type="ECO:0000269" key="9">
    <source>
    </source>
</evidence>
<evidence type="ECO:0000303" key="10">
    <source>
    </source>
</evidence>
<evidence type="ECO:0000303" key="11">
    <source>
    </source>
</evidence>
<evidence type="ECO:0000303" key="12">
    <source>
    </source>
</evidence>
<evidence type="ECO:0000303" key="13">
    <source>
    </source>
</evidence>
<evidence type="ECO:0000305" key="14"/>
<evidence type="ECO:0007744" key="15">
    <source>
    </source>
</evidence>